<protein>
    <recommendedName>
        <fullName evidence="1">Large ribosomal subunit protein bL21</fullName>
    </recommendedName>
    <alternativeName>
        <fullName evidence="2">50S ribosomal protein L21</fullName>
    </alternativeName>
</protein>
<accession>A8AWF7</accession>
<dbReference type="EMBL" id="CP000725">
    <property type="protein sequence ID" value="ABV09137.1"/>
    <property type="molecule type" value="Genomic_DNA"/>
</dbReference>
<dbReference type="RefSeq" id="WP_009754237.1">
    <property type="nucleotide sequence ID" value="NC_009785.1"/>
</dbReference>
<dbReference type="SMR" id="A8AWF7"/>
<dbReference type="STRING" id="467705.SGO_0818"/>
<dbReference type="GeneID" id="93787073"/>
<dbReference type="KEGG" id="sgo:SGO_0818"/>
<dbReference type="eggNOG" id="COG0261">
    <property type="taxonomic scope" value="Bacteria"/>
</dbReference>
<dbReference type="HOGENOM" id="CLU_061463_3_1_9"/>
<dbReference type="Proteomes" id="UP000001131">
    <property type="component" value="Chromosome"/>
</dbReference>
<dbReference type="GO" id="GO:0005737">
    <property type="term" value="C:cytoplasm"/>
    <property type="evidence" value="ECO:0007669"/>
    <property type="project" value="UniProtKB-ARBA"/>
</dbReference>
<dbReference type="GO" id="GO:1990904">
    <property type="term" value="C:ribonucleoprotein complex"/>
    <property type="evidence" value="ECO:0007669"/>
    <property type="project" value="UniProtKB-KW"/>
</dbReference>
<dbReference type="GO" id="GO:0005840">
    <property type="term" value="C:ribosome"/>
    <property type="evidence" value="ECO:0007669"/>
    <property type="project" value="UniProtKB-KW"/>
</dbReference>
<dbReference type="GO" id="GO:0019843">
    <property type="term" value="F:rRNA binding"/>
    <property type="evidence" value="ECO:0007669"/>
    <property type="project" value="UniProtKB-UniRule"/>
</dbReference>
<dbReference type="GO" id="GO:0003735">
    <property type="term" value="F:structural constituent of ribosome"/>
    <property type="evidence" value="ECO:0007669"/>
    <property type="project" value="InterPro"/>
</dbReference>
<dbReference type="GO" id="GO:0006412">
    <property type="term" value="P:translation"/>
    <property type="evidence" value="ECO:0007669"/>
    <property type="project" value="UniProtKB-UniRule"/>
</dbReference>
<dbReference type="HAMAP" id="MF_01363">
    <property type="entry name" value="Ribosomal_bL21"/>
    <property type="match status" value="1"/>
</dbReference>
<dbReference type="InterPro" id="IPR028909">
    <property type="entry name" value="bL21-like"/>
</dbReference>
<dbReference type="InterPro" id="IPR036164">
    <property type="entry name" value="bL21-like_sf"/>
</dbReference>
<dbReference type="InterPro" id="IPR001787">
    <property type="entry name" value="Ribosomal_bL21"/>
</dbReference>
<dbReference type="InterPro" id="IPR018258">
    <property type="entry name" value="Ribosomal_bL21_CS"/>
</dbReference>
<dbReference type="NCBIfam" id="TIGR00061">
    <property type="entry name" value="L21"/>
    <property type="match status" value="1"/>
</dbReference>
<dbReference type="PANTHER" id="PTHR21349">
    <property type="entry name" value="50S RIBOSOMAL PROTEIN L21"/>
    <property type="match status" value="1"/>
</dbReference>
<dbReference type="PANTHER" id="PTHR21349:SF0">
    <property type="entry name" value="LARGE RIBOSOMAL SUBUNIT PROTEIN BL21M"/>
    <property type="match status" value="1"/>
</dbReference>
<dbReference type="Pfam" id="PF00829">
    <property type="entry name" value="Ribosomal_L21p"/>
    <property type="match status" value="1"/>
</dbReference>
<dbReference type="SUPFAM" id="SSF141091">
    <property type="entry name" value="L21p-like"/>
    <property type="match status" value="1"/>
</dbReference>
<dbReference type="PROSITE" id="PS01169">
    <property type="entry name" value="RIBOSOMAL_L21"/>
    <property type="match status" value="1"/>
</dbReference>
<proteinExistence type="inferred from homology"/>
<organism>
    <name type="scientific">Streptococcus gordonii (strain Challis / ATCC 35105 / BCRC 15272 / CH1 / DL1 / V288)</name>
    <dbReference type="NCBI Taxonomy" id="467705"/>
    <lineage>
        <taxon>Bacteria</taxon>
        <taxon>Bacillati</taxon>
        <taxon>Bacillota</taxon>
        <taxon>Bacilli</taxon>
        <taxon>Lactobacillales</taxon>
        <taxon>Streptococcaceae</taxon>
        <taxon>Streptococcus</taxon>
    </lineage>
</organism>
<reference key="1">
    <citation type="journal article" date="2007" name="J. Bacteriol.">
        <title>Genome-wide transcriptional changes in Streptococcus gordonii in response to competence signaling peptide.</title>
        <authorList>
            <person name="Vickerman M.M."/>
            <person name="Iobst S."/>
            <person name="Jesionowski A.M."/>
            <person name="Gill S.R."/>
        </authorList>
    </citation>
    <scope>NUCLEOTIDE SEQUENCE [LARGE SCALE GENOMIC DNA]</scope>
    <source>
        <strain>Challis / ATCC 35105 / BCRC 15272 / CH1 / DL1 / V288</strain>
    </source>
</reference>
<comment type="function">
    <text evidence="1">This protein binds to 23S rRNA in the presence of protein L20.</text>
</comment>
<comment type="subunit">
    <text evidence="1">Part of the 50S ribosomal subunit. Contacts protein L20.</text>
</comment>
<comment type="similarity">
    <text evidence="1">Belongs to the bacterial ribosomal protein bL21 family.</text>
</comment>
<evidence type="ECO:0000255" key="1">
    <source>
        <dbReference type="HAMAP-Rule" id="MF_01363"/>
    </source>
</evidence>
<evidence type="ECO:0000305" key="2"/>
<keyword id="KW-1185">Reference proteome</keyword>
<keyword id="KW-0687">Ribonucleoprotein</keyword>
<keyword id="KW-0689">Ribosomal protein</keyword>
<keyword id="KW-0694">RNA-binding</keyword>
<keyword id="KW-0699">rRNA-binding</keyword>
<sequence>MSTYAIIKTGGKQVKVEVGQAIYVEKLNVEAGQDVTFDEVVLVGGEKTVVGTPLVAGATVVGTVEKQGKQKKVVTFKYKPKKGSHRKQGHRQPYTKVVINAINA</sequence>
<gene>
    <name evidence="1" type="primary">rplU</name>
    <name type="ordered locus">SGO_0818</name>
</gene>
<name>RL21_STRGC</name>
<feature type="chain" id="PRO_1000087006" description="Large ribosomal subunit protein bL21">
    <location>
        <begin position="1"/>
        <end position="104"/>
    </location>
</feature>